<protein>
    <recommendedName>
        <fullName evidence="1">Release factor glutamine methyltransferase</fullName>
        <shortName evidence="1">RF MTase</shortName>
        <ecNumber evidence="1">2.1.1.297</ecNumber>
    </recommendedName>
    <alternativeName>
        <fullName evidence="1">N5-glutamine methyltransferase PrmC</fullName>
    </alternativeName>
    <alternativeName>
        <fullName evidence="1">Protein-(glutamine-N5) MTase PrmC</fullName>
    </alternativeName>
    <alternativeName>
        <fullName evidence="1">Protein-glutamine N-methyltransferase PrmC</fullName>
    </alternativeName>
</protein>
<dbReference type="EC" id="2.1.1.297" evidence="1"/>
<dbReference type="EMBL" id="BX640413">
    <property type="protein sequence ID" value="CAE40990.1"/>
    <property type="molecule type" value="Genomic_DNA"/>
</dbReference>
<dbReference type="RefSeq" id="NP_879516.1">
    <property type="nucleotide sequence ID" value="NC_002929.2"/>
</dbReference>
<dbReference type="RefSeq" id="WP_010929958.1">
    <property type="nucleotide sequence ID" value="NZ_CP039022.1"/>
</dbReference>
<dbReference type="SMR" id="Q7W022"/>
<dbReference type="STRING" id="257313.BP0679"/>
<dbReference type="PaxDb" id="257313-BP0679"/>
<dbReference type="GeneID" id="69603284"/>
<dbReference type="KEGG" id="bpe:BP0679"/>
<dbReference type="PATRIC" id="fig|257313.5.peg.728"/>
<dbReference type="eggNOG" id="COG2890">
    <property type="taxonomic scope" value="Bacteria"/>
</dbReference>
<dbReference type="HOGENOM" id="CLU_018398_3_1_4"/>
<dbReference type="Proteomes" id="UP000002676">
    <property type="component" value="Chromosome"/>
</dbReference>
<dbReference type="GO" id="GO:0003676">
    <property type="term" value="F:nucleic acid binding"/>
    <property type="evidence" value="ECO:0007669"/>
    <property type="project" value="InterPro"/>
</dbReference>
<dbReference type="GO" id="GO:0102559">
    <property type="term" value="F:protein-(glutamine-N5) methyltransferase activity"/>
    <property type="evidence" value="ECO:0007669"/>
    <property type="project" value="UniProtKB-EC"/>
</dbReference>
<dbReference type="GO" id="GO:0036009">
    <property type="term" value="F:protein-glutamine N-methyltransferase activity"/>
    <property type="evidence" value="ECO:0007669"/>
    <property type="project" value="UniProtKB-UniRule"/>
</dbReference>
<dbReference type="GO" id="GO:0032259">
    <property type="term" value="P:methylation"/>
    <property type="evidence" value="ECO:0007669"/>
    <property type="project" value="UniProtKB-KW"/>
</dbReference>
<dbReference type="CDD" id="cd02440">
    <property type="entry name" value="AdoMet_MTases"/>
    <property type="match status" value="1"/>
</dbReference>
<dbReference type="FunFam" id="3.40.50.150:FF:000053">
    <property type="entry name" value="Release factor glutamine methyltransferase"/>
    <property type="match status" value="1"/>
</dbReference>
<dbReference type="Gene3D" id="1.10.8.10">
    <property type="entry name" value="DNA helicase RuvA subunit, C-terminal domain"/>
    <property type="match status" value="1"/>
</dbReference>
<dbReference type="Gene3D" id="3.40.50.150">
    <property type="entry name" value="Vaccinia Virus protein VP39"/>
    <property type="match status" value="1"/>
</dbReference>
<dbReference type="HAMAP" id="MF_02126">
    <property type="entry name" value="RF_methyltr_PrmC"/>
    <property type="match status" value="1"/>
</dbReference>
<dbReference type="InterPro" id="IPR002052">
    <property type="entry name" value="DNA_methylase_N6_adenine_CS"/>
</dbReference>
<dbReference type="InterPro" id="IPR004556">
    <property type="entry name" value="HemK-like"/>
</dbReference>
<dbReference type="InterPro" id="IPR050320">
    <property type="entry name" value="N5-glutamine_MTase"/>
</dbReference>
<dbReference type="InterPro" id="IPR040758">
    <property type="entry name" value="PrmC_N"/>
</dbReference>
<dbReference type="InterPro" id="IPR019874">
    <property type="entry name" value="RF_methyltr_PrmC"/>
</dbReference>
<dbReference type="InterPro" id="IPR029063">
    <property type="entry name" value="SAM-dependent_MTases_sf"/>
</dbReference>
<dbReference type="InterPro" id="IPR007848">
    <property type="entry name" value="Small_mtfrase_dom"/>
</dbReference>
<dbReference type="NCBIfam" id="TIGR00536">
    <property type="entry name" value="hemK_fam"/>
    <property type="match status" value="1"/>
</dbReference>
<dbReference type="NCBIfam" id="TIGR03534">
    <property type="entry name" value="RF_mod_PrmC"/>
    <property type="match status" value="1"/>
</dbReference>
<dbReference type="PANTHER" id="PTHR18895">
    <property type="entry name" value="HEMK METHYLTRANSFERASE"/>
    <property type="match status" value="1"/>
</dbReference>
<dbReference type="PANTHER" id="PTHR18895:SF74">
    <property type="entry name" value="MTRF1L RELEASE FACTOR GLUTAMINE METHYLTRANSFERASE"/>
    <property type="match status" value="1"/>
</dbReference>
<dbReference type="Pfam" id="PF05175">
    <property type="entry name" value="MTS"/>
    <property type="match status" value="1"/>
</dbReference>
<dbReference type="Pfam" id="PF17827">
    <property type="entry name" value="PrmC_N"/>
    <property type="match status" value="1"/>
</dbReference>
<dbReference type="SUPFAM" id="SSF53335">
    <property type="entry name" value="S-adenosyl-L-methionine-dependent methyltransferases"/>
    <property type="match status" value="1"/>
</dbReference>
<feature type="chain" id="PRO_0000414503" description="Release factor glutamine methyltransferase">
    <location>
        <begin position="1"/>
        <end position="270"/>
    </location>
</feature>
<feature type="binding site" evidence="1">
    <location>
        <begin position="112"/>
        <end position="116"/>
    </location>
    <ligand>
        <name>S-adenosyl-L-methionine</name>
        <dbReference type="ChEBI" id="CHEBI:59789"/>
    </ligand>
</feature>
<feature type="binding site" evidence="1">
    <location>
        <position position="135"/>
    </location>
    <ligand>
        <name>S-adenosyl-L-methionine</name>
        <dbReference type="ChEBI" id="CHEBI:59789"/>
    </ligand>
</feature>
<feature type="binding site" evidence="1">
    <location>
        <position position="162"/>
    </location>
    <ligand>
        <name>S-adenosyl-L-methionine</name>
        <dbReference type="ChEBI" id="CHEBI:59789"/>
    </ligand>
</feature>
<feature type="binding site" evidence="1">
    <location>
        <begin position="178"/>
        <end position="181"/>
    </location>
    <ligand>
        <name>substrate</name>
    </ligand>
</feature>
<feature type="binding site" evidence="1">
    <location>
        <position position="178"/>
    </location>
    <ligand>
        <name>S-adenosyl-L-methionine</name>
        <dbReference type="ChEBI" id="CHEBI:59789"/>
    </ligand>
</feature>
<gene>
    <name evidence="1" type="primary">prmC</name>
    <name type="synonym">hemK</name>
    <name type="ordered locus">BP0679</name>
</gene>
<proteinExistence type="inferred from homology"/>
<sequence length="270" mass="29080">MTLLKDLLADPGLPRLEARMLAEHVLGRSRAWLLAHDTDPVEPAHEAAWRQLAARRLAGEPMAYLLGGREFMGHWYALTPDVLIPRPDTELLVETALHWLQGRAAPRVLDLGTGSGAIAVSVALGCPQAEVTATDLSAAALAVAEGNAQRLGARVRCLAGDWYEALPAQDRYDLIVSNPPYIAREDAHLAQGDLRFEPRGALTDENDGLAALARIAGGAPGRLLPGGAIWMEHGWDQAEAARALLRQAGLREVHSRRDLAGIERISGGYL</sequence>
<accession>Q7W022</accession>
<reference key="1">
    <citation type="journal article" date="2003" name="Nat. Genet.">
        <title>Comparative analysis of the genome sequences of Bordetella pertussis, Bordetella parapertussis and Bordetella bronchiseptica.</title>
        <authorList>
            <person name="Parkhill J."/>
            <person name="Sebaihia M."/>
            <person name="Preston A."/>
            <person name="Murphy L.D."/>
            <person name="Thomson N.R."/>
            <person name="Harris D.E."/>
            <person name="Holden M.T.G."/>
            <person name="Churcher C.M."/>
            <person name="Bentley S.D."/>
            <person name="Mungall K.L."/>
            <person name="Cerdeno-Tarraga A.-M."/>
            <person name="Temple L."/>
            <person name="James K.D."/>
            <person name="Harris B."/>
            <person name="Quail M.A."/>
            <person name="Achtman M."/>
            <person name="Atkin R."/>
            <person name="Baker S."/>
            <person name="Basham D."/>
            <person name="Bason N."/>
            <person name="Cherevach I."/>
            <person name="Chillingworth T."/>
            <person name="Collins M."/>
            <person name="Cronin A."/>
            <person name="Davis P."/>
            <person name="Doggett J."/>
            <person name="Feltwell T."/>
            <person name="Goble A."/>
            <person name="Hamlin N."/>
            <person name="Hauser H."/>
            <person name="Holroyd S."/>
            <person name="Jagels K."/>
            <person name="Leather S."/>
            <person name="Moule S."/>
            <person name="Norberczak H."/>
            <person name="O'Neil S."/>
            <person name="Ormond D."/>
            <person name="Price C."/>
            <person name="Rabbinowitsch E."/>
            <person name="Rutter S."/>
            <person name="Sanders M."/>
            <person name="Saunders D."/>
            <person name="Seeger K."/>
            <person name="Sharp S."/>
            <person name="Simmonds M."/>
            <person name="Skelton J."/>
            <person name="Squares R."/>
            <person name="Squares S."/>
            <person name="Stevens K."/>
            <person name="Unwin L."/>
            <person name="Whitehead S."/>
            <person name="Barrell B.G."/>
            <person name="Maskell D.J."/>
        </authorList>
    </citation>
    <scope>NUCLEOTIDE SEQUENCE [LARGE SCALE GENOMIC DNA]</scope>
    <source>
        <strain>Tohama I / ATCC BAA-589 / NCTC 13251</strain>
    </source>
</reference>
<evidence type="ECO:0000255" key="1">
    <source>
        <dbReference type="HAMAP-Rule" id="MF_02126"/>
    </source>
</evidence>
<name>PRMC_BORPE</name>
<organism>
    <name type="scientific">Bordetella pertussis (strain Tohama I / ATCC BAA-589 / NCTC 13251)</name>
    <dbReference type="NCBI Taxonomy" id="257313"/>
    <lineage>
        <taxon>Bacteria</taxon>
        <taxon>Pseudomonadati</taxon>
        <taxon>Pseudomonadota</taxon>
        <taxon>Betaproteobacteria</taxon>
        <taxon>Burkholderiales</taxon>
        <taxon>Alcaligenaceae</taxon>
        <taxon>Bordetella</taxon>
    </lineage>
</organism>
<comment type="function">
    <text evidence="1">Methylates the class 1 translation termination release factors RF1/PrfA and RF2/PrfB on the glutamine residue of the universally conserved GGQ motif.</text>
</comment>
<comment type="catalytic activity">
    <reaction evidence="1">
        <text>L-glutaminyl-[peptide chain release factor] + S-adenosyl-L-methionine = N(5)-methyl-L-glutaminyl-[peptide chain release factor] + S-adenosyl-L-homocysteine + H(+)</text>
        <dbReference type="Rhea" id="RHEA:42896"/>
        <dbReference type="Rhea" id="RHEA-COMP:10271"/>
        <dbReference type="Rhea" id="RHEA-COMP:10272"/>
        <dbReference type="ChEBI" id="CHEBI:15378"/>
        <dbReference type="ChEBI" id="CHEBI:30011"/>
        <dbReference type="ChEBI" id="CHEBI:57856"/>
        <dbReference type="ChEBI" id="CHEBI:59789"/>
        <dbReference type="ChEBI" id="CHEBI:61891"/>
        <dbReference type="EC" id="2.1.1.297"/>
    </reaction>
</comment>
<comment type="similarity">
    <text evidence="1">Belongs to the protein N5-glutamine methyltransferase family. PrmC subfamily.</text>
</comment>
<keyword id="KW-0489">Methyltransferase</keyword>
<keyword id="KW-1185">Reference proteome</keyword>
<keyword id="KW-0949">S-adenosyl-L-methionine</keyword>
<keyword id="KW-0808">Transferase</keyword>